<evidence type="ECO:0000255" key="1">
    <source>
        <dbReference type="HAMAP-Rule" id="MF_00339"/>
    </source>
</evidence>
<sequence length="340" mass="35969">MKRIAVLTSGGDAPGMNAAIRAVVRKAISEGMEVYGINQGYYGMVTGDIFPLDANSVGDTINRGGTFLRSARYPEFAELEGQLKGIEQLKKHGIEGVVVIGGDGSYHGAMRLTEHGFPAVGLPGTIDNDIVGTDYTIGFDTAVATAVENLDRLRDTSASHNRTFVVEVMGRNAGDIALWSGIAAGADQIIVPEEEFNIDEVVSNVRAGYAAGKHHQIIVLAEGVMSGDEFAKTMKAAGDDSDLRVTNLGHLLRGGSPTARDRVLASRMGAYAVQLLKEGRGGLAVGVHNEEMVESPILGLAEEGALFSLTDEGKIVVNNPHKADLRLAALNRDLANQSSK</sequence>
<comment type="function">
    <text evidence="1">Catalyzes the phosphorylation of D-fructose 6-phosphate to fructose 1,6-bisphosphate by ATP, the first committing step of glycolysis.</text>
</comment>
<comment type="catalytic activity">
    <reaction evidence="1">
        <text>beta-D-fructose 6-phosphate + ATP = beta-D-fructose 1,6-bisphosphate + ADP + H(+)</text>
        <dbReference type="Rhea" id="RHEA:16109"/>
        <dbReference type="ChEBI" id="CHEBI:15378"/>
        <dbReference type="ChEBI" id="CHEBI:30616"/>
        <dbReference type="ChEBI" id="CHEBI:32966"/>
        <dbReference type="ChEBI" id="CHEBI:57634"/>
        <dbReference type="ChEBI" id="CHEBI:456216"/>
        <dbReference type="EC" id="2.7.1.11"/>
    </reaction>
</comment>
<comment type="cofactor">
    <cofactor evidence="1">
        <name>Mg(2+)</name>
        <dbReference type="ChEBI" id="CHEBI:18420"/>
    </cofactor>
</comment>
<comment type="activity regulation">
    <text evidence="1">Allosterically activated by ADP and other diphosphonucleosides, and allosterically inhibited by phosphoenolpyruvate.</text>
</comment>
<comment type="pathway">
    <text evidence="1">Carbohydrate degradation; glycolysis; D-glyceraldehyde 3-phosphate and glycerone phosphate from D-glucose: step 3/4.</text>
</comment>
<comment type="subunit">
    <text evidence="1">Homotetramer.</text>
</comment>
<comment type="subcellular location">
    <subcellularLocation>
        <location evidence="1">Cytoplasm</location>
    </subcellularLocation>
</comment>
<comment type="similarity">
    <text evidence="1">Belongs to the phosphofructokinase type A (PFKA) family. ATP-dependent PFK group I subfamily. Prokaryotic clade 'B1' sub-subfamily.</text>
</comment>
<protein>
    <recommendedName>
        <fullName evidence="1">ATP-dependent 6-phosphofructokinase</fullName>
        <shortName evidence="1">ATP-PFK</shortName>
        <shortName evidence="1">Phosphofructokinase</shortName>
        <ecNumber evidence="1">2.7.1.11</ecNumber>
    </recommendedName>
    <alternativeName>
        <fullName evidence="1">Phosphohexokinase</fullName>
    </alternativeName>
</protein>
<name>PFKA_STRA1</name>
<accession>Q3K1E6</accession>
<keyword id="KW-0021">Allosteric enzyme</keyword>
<keyword id="KW-0067">ATP-binding</keyword>
<keyword id="KW-0963">Cytoplasm</keyword>
<keyword id="KW-0324">Glycolysis</keyword>
<keyword id="KW-0418">Kinase</keyword>
<keyword id="KW-0460">Magnesium</keyword>
<keyword id="KW-0479">Metal-binding</keyword>
<keyword id="KW-0547">Nucleotide-binding</keyword>
<keyword id="KW-0808">Transferase</keyword>
<proteinExistence type="inferred from homology"/>
<reference key="1">
    <citation type="journal article" date="2005" name="Proc. Natl. Acad. Sci. U.S.A.">
        <title>Genome analysis of multiple pathogenic isolates of Streptococcus agalactiae: implications for the microbial 'pan-genome'.</title>
        <authorList>
            <person name="Tettelin H."/>
            <person name="Masignani V."/>
            <person name="Cieslewicz M.J."/>
            <person name="Donati C."/>
            <person name="Medini D."/>
            <person name="Ward N.L."/>
            <person name="Angiuoli S.V."/>
            <person name="Crabtree J."/>
            <person name="Jones A.L."/>
            <person name="Durkin A.S."/>
            <person name="DeBoy R.T."/>
            <person name="Davidsen T.M."/>
            <person name="Mora M."/>
            <person name="Scarselli M."/>
            <person name="Margarit y Ros I."/>
            <person name="Peterson J.D."/>
            <person name="Hauser C.R."/>
            <person name="Sundaram J.P."/>
            <person name="Nelson W.C."/>
            <person name="Madupu R."/>
            <person name="Brinkac L.M."/>
            <person name="Dodson R.J."/>
            <person name="Rosovitz M.J."/>
            <person name="Sullivan S.A."/>
            <person name="Daugherty S.C."/>
            <person name="Haft D.H."/>
            <person name="Selengut J."/>
            <person name="Gwinn M.L."/>
            <person name="Zhou L."/>
            <person name="Zafar N."/>
            <person name="Khouri H."/>
            <person name="Radune D."/>
            <person name="Dimitrov G."/>
            <person name="Watkins K."/>
            <person name="O'Connor K.J."/>
            <person name="Smith S."/>
            <person name="Utterback T.R."/>
            <person name="White O."/>
            <person name="Rubens C.E."/>
            <person name="Grandi G."/>
            <person name="Madoff L.C."/>
            <person name="Kasper D.L."/>
            <person name="Telford J.L."/>
            <person name="Wessels M.R."/>
            <person name="Rappuoli R."/>
            <person name="Fraser C.M."/>
        </authorList>
    </citation>
    <scope>NUCLEOTIDE SEQUENCE [LARGE SCALE GENOMIC DNA]</scope>
    <source>
        <strain>ATCC 27591 / A909 / CDC SS700</strain>
    </source>
</reference>
<gene>
    <name evidence="1" type="primary">pfkA</name>
    <name type="ordered locus">SAK_1036</name>
</gene>
<feature type="chain" id="PRO_1000059793" description="ATP-dependent 6-phosphofructokinase">
    <location>
        <begin position="1"/>
        <end position="340"/>
    </location>
</feature>
<feature type="active site" description="Proton acceptor" evidence="1">
    <location>
        <position position="127"/>
    </location>
</feature>
<feature type="binding site" evidence="1">
    <location>
        <position position="11"/>
    </location>
    <ligand>
        <name>ATP</name>
        <dbReference type="ChEBI" id="CHEBI:30616"/>
    </ligand>
</feature>
<feature type="binding site" evidence="1">
    <location>
        <begin position="21"/>
        <end position="25"/>
    </location>
    <ligand>
        <name>ADP</name>
        <dbReference type="ChEBI" id="CHEBI:456216"/>
        <note>allosteric activator; ligand shared between dimeric partners</note>
    </ligand>
</feature>
<feature type="binding site" evidence="1">
    <location>
        <begin position="72"/>
        <end position="73"/>
    </location>
    <ligand>
        <name>ATP</name>
        <dbReference type="ChEBI" id="CHEBI:30616"/>
    </ligand>
</feature>
<feature type="binding site" evidence="1">
    <location>
        <begin position="102"/>
        <end position="105"/>
    </location>
    <ligand>
        <name>ATP</name>
        <dbReference type="ChEBI" id="CHEBI:30616"/>
    </ligand>
</feature>
<feature type="binding site" evidence="1">
    <location>
        <position position="103"/>
    </location>
    <ligand>
        <name>Mg(2+)</name>
        <dbReference type="ChEBI" id="CHEBI:18420"/>
        <note>catalytic</note>
    </ligand>
</feature>
<feature type="binding site" description="in other chain" evidence="1">
    <location>
        <begin position="125"/>
        <end position="127"/>
    </location>
    <ligand>
        <name>substrate</name>
        <note>ligand shared between dimeric partners</note>
    </ligand>
</feature>
<feature type="binding site" description="in other chain" evidence="1">
    <location>
        <position position="154"/>
    </location>
    <ligand>
        <name>ADP</name>
        <dbReference type="ChEBI" id="CHEBI:456216"/>
        <note>allosteric activator; ligand shared between dimeric partners</note>
    </ligand>
</feature>
<feature type="binding site" evidence="1">
    <location>
        <position position="162"/>
    </location>
    <ligand>
        <name>substrate</name>
        <note>ligand shared between dimeric partners</note>
    </ligand>
</feature>
<feature type="binding site" description="in other chain" evidence="1">
    <location>
        <begin position="169"/>
        <end position="171"/>
    </location>
    <ligand>
        <name>substrate</name>
        <note>ligand shared between dimeric partners</note>
    </ligand>
</feature>
<feature type="binding site" description="in other chain" evidence="1">
    <location>
        <begin position="185"/>
        <end position="187"/>
    </location>
    <ligand>
        <name>ADP</name>
        <dbReference type="ChEBI" id="CHEBI:456216"/>
        <note>allosteric activator; ligand shared between dimeric partners</note>
    </ligand>
</feature>
<feature type="binding site" description="in other chain" evidence="1">
    <location>
        <begin position="213"/>
        <end position="215"/>
    </location>
    <ligand>
        <name>ADP</name>
        <dbReference type="ChEBI" id="CHEBI:456216"/>
        <note>allosteric activator; ligand shared between dimeric partners</note>
    </ligand>
</feature>
<feature type="binding site" description="in other chain" evidence="1">
    <location>
        <position position="222"/>
    </location>
    <ligand>
        <name>substrate</name>
        <note>ligand shared between dimeric partners</note>
    </ligand>
</feature>
<feature type="binding site" evidence="1">
    <location>
        <position position="244"/>
    </location>
    <ligand>
        <name>substrate</name>
        <note>ligand shared between dimeric partners</note>
    </ligand>
</feature>
<feature type="binding site" description="in other chain" evidence="1">
    <location>
        <begin position="250"/>
        <end position="253"/>
    </location>
    <ligand>
        <name>substrate</name>
        <note>ligand shared between dimeric partners</note>
    </ligand>
</feature>
<organism>
    <name type="scientific">Streptococcus agalactiae serotype Ia (strain ATCC 27591 / A909 / CDC SS700)</name>
    <dbReference type="NCBI Taxonomy" id="205921"/>
    <lineage>
        <taxon>Bacteria</taxon>
        <taxon>Bacillati</taxon>
        <taxon>Bacillota</taxon>
        <taxon>Bacilli</taxon>
        <taxon>Lactobacillales</taxon>
        <taxon>Streptococcaceae</taxon>
        <taxon>Streptococcus</taxon>
    </lineage>
</organism>
<dbReference type="EC" id="2.7.1.11" evidence="1"/>
<dbReference type="EMBL" id="CP000114">
    <property type="protein sequence ID" value="ABA44705.1"/>
    <property type="molecule type" value="Genomic_DNA"/>
</dbReference>
<dbReference type="RefSeq" id="WP_000820831.1">
    <property type="nucleotide sequence ID" value="NC_007432.1"/>
</dbReference>
<dbReference type="SMR" id="Q3K1E6"/>
<dbReference type="KEGG" id="sak:SAK_1036"/>
<dbReference type="HOGENOM" id="CLU_020655_0_1_9"/>
<dbReference type="UniPathway" id="UPA00109">
    <property type="reaction ID" value="UER00182"/>
</dbReference>
<dbReference type="GO" id="GO:0005945">
    <property type="term" value="C:6-phosphofructokinase complex"/>
    <property type="evidence" value="ECO:0007669"/>
    <property type="project" value="TreeGrafter"/>
</dbReference>
<dbReference type="GO" id="GO:0003872">
    <property type="term" value="F:6-phosphofructokinase activity"/>
    <property type="evidence" value="ECO:0007669"/>
    <property type="project" value="UniProtKB-UniRule"/>
</dbReference>
<dbReference type="GO" id="GO:0016208">
    <property type="term" value="F:AMP binding"/>
    <property type="evidence" value="ECO:0007669"/>
    <property type="project" value="TreeGrafter"/>
</dbReference>
<dbReference type="GO" id="GO:0005524">
    <property type="term" value="F:ATP binding"/>
    <property type="evidence" value="ECO:0007669"/>
    <property type="project" value="UniProtKB-KW"/>
</dbReference>
<dbReference type="GO" id="GO:0070095">
    <property type="term" value="F:fructose-6-phosphate binding"/>
    <property type="evidence" value="ECO:0007669"/>
    <property type="project" value="TreeGrafter"/>
</dbReference>
<dbReference type="GO" id="GO:0042802">
    <property type="term" value="F:identical protein binding"/>
    <property type="evidence" value="ECO:0007669"/>
    <property type="project" value="TreeGrafter"/>
</dbReference>
<dbReference type="GO" id="GO:0046872">
    <property type="term" value="F:metal ion binding"/>
    <property type="evidence" value="ECO:0007669"/>
    <property type="project" value="UniProtKB-KW"/>
</dbReference>
<dbReference type="GO" id="GO:0048029">
    <property type="term" value="F:monosaccharide binding"/>
    <property type="evidence" value="ECO:0007669"/>
    <property type="project" value="TreeGrafter"/>
</dbReference>
<dbReference type="GO" id="GO:0061621">
    <property type="term" value="P:canonical glycolysis"/>
    <property type="evidence" value="ECO:0007669"/>
    <property type="project" value="TreeGrafter"/>
</dbReference>
<dbReference type="GO" id="GO:0030388">
    <property type="term" value="P:fructose 1,6-bisphosphate metabolic process"/>
    <property type="evidence" value="ECO:0007669"/>
    <property type="project" value="TreeGrafter"/>
</dbReference>
<dbReference type="GO" id="GO:0006002">
    <property type="term" value="P:fructose 6-phosphate metabolic process"/>
    <property type="evidence" value="ECO:0007669"/>
    <property type="project" value="InterPro"/>
</dbReference>
<dbReference type="FunFam" id="3.40.50.450:FF:000001">
    <property type="entry name" value="ATP-dependent 6-phosphofructokinase"/>
    <property type="match status" value="1"/>
</dbReference>
<dbReference type="FunFam" id="3.40.50.460:FF:000002">
    <property type="entry name" value="ATP-dependent 6-phosphofructokinase"/>
    <property type="match status" value="1"/>
</dbReference>
<dbReference type="Gene3D" id="3.40.50.450">
    <property type="match status" value="1"/>
</dbReference>
<dbReference type="Gene3D" id="3.40.50.460">
    <property type="entry name" value="Phosphofructokinase domain"/>
    <property type="match status" value="1"/>
</dbReference>
<dbReference type="HAMAP" id="MF_00339">
    <property type="entry name" value="Phosphofructokinase_I_B1"/>
    <property type="match status" value="1"/>
</dbReference>
<dbReference type="InterPro" id="IPR022953">
    <property type="entry name" value="ATP_PFK"/>
</dbReference>
<dbReference type="InterPro" id="IPR012003">
    <property type="entry name" value="ATP_PFK_prok-type"/>
</dbReference>
<dbReference type="InterPro" id="IPR012828">
    <property type="entry name" value="PFKA_ATP_prok"/>
</dbReference>
<dbReference type="InterPro" id="IPR015912">
    <property type="entry name" value="Phosphofructokinase_CS"/>
</dbReference>
<dbReference type="InterPro" id="IPR000023">
    <property type="entry name" value="Phosphofructokinase_dom"/>
</dbReference>
<dbReference type="InterPro" id="IPR035966">
    <property type="entry name" value="PKF_sf"/>
</dbReference>
<dbReference type="NCBIfam" id="TIGR02482">
    <property type="entry name" value="PFKA_ATP"/>
    <property type="match status" value="1"/>
</dbReference>
<dbReference type="NCBIfam" id="NF002872">
    <property type="entry name" value="PRK03202.1"/>
    <property type="match status" value="1"/>
</dbReference>
<dbReference type="PANTHER" id="PTHR13697:SF4">
    <property type="entry name" value="ATP-DEPENDENT 6-PHOSPHOFRUCTOKINASE"/>
    <property type="match status" value="1"/>
</dbReference>
<dbReference type="PANTHER" id="PTHR13697">
    <property type="entry name" value="PHOSPHOFRUCTOKINASE"/>
    <property type="match status" value="1"/>
</dbReference>
<dbReference type="Pfam" id="PF00365">
    <property type="entry name" value="PFK"/>
    <property type="match status" value="1"/>
</dbReference>
<dbReference type="PIRSF" id="PIRSF000532">
    <property type="entry name" value="ATP_PFK_prok"/>
    <property type="match status" value="1"/>
</dbReference>
<dbReference type="PRINTS" id="PR00476">
    <property type="entry name" value="PHFRCTKINASE"/>
</dbReference>
<dbReference type="SUPFAM" id="SSF53784">
    <property type="entry name" value="Phosphofructokinase"/>
    <property type="match status" value="1"/>
</dbReference>
<dbReference type="PROSITE" id="PS00433">
    <property type="entry name" value="PHOSPHOFRUCTOKINASE"/>
    <property type="match status" value="1"/>
</dbReference>